<proteinExistence type="inferred from homology"/>
<feature type="chain" id="PRO_1000070967" description="LexA repressor">
    <location>
        <begin position="1"/>
        <end position="209"/>
    </location>
</feature>
<feature type="DNA-binding region" description="H-T-H motif" evidence="1">
    <location>
        <begin position="28"/>
        <end position="48"/>
    </location>
</feature>
<feature type="active site" description="For autocatalytic cleavage activity" evidence="1">
    <location>
        <position position="126"/>
    </location>
</feature>
<feature type="active site" description="For autocatalytic cleavage activity" evidence="1">
    <location>
        <position position="163"/>
    </location>
</feature>
<feature type="site" description="Cleavage; by autolysis" evidence="1">
    <location>
        <begin position="91"/>
        <end position="92"/>
    </location>
</feature>
<accession>A5F4F6</accession>
<accession>C3M2F2</accession>
<protein>
    <recommendedName>
        <fullName evidence="1">LexA repressor</fullName>
        <ecNumber evidence="1">3.4.21.88</ecNumber>
    </recommendedName>
</protein>
<name>LEXA_VIBC3</name>
<gene>
    <name evidence="1" type="primary">lexA</name>
    <name type="ordered locus">VC0395_A2423</name>
    <name type="ordered locus">VC395_0088</name>
</gene>
<keyword id="KW-0068">Autocatalytic cleavage</keyword>
<keyword id="KW-0227">DNA damage</keyword>
<keyword id="KW-0234">DNA repair</keyword>
<keyword id="KW-0235">DNA replication</keyword>
<keyword id="KW-0238">DNA-binding</keyword>
<keyword id="KW-0378">Hydrolase</keyword>
<keyword id="KW-0678">Repressor</keyword>
<keyword id="KW-0742">SOS response</keyword>
<keyword id="KW-0804">Transcription</keyword>
<keyword id="KW-0805">Transcription regulation</keyword>
<comment type="function">
    <text evidence="1">Represses a number of genes involved in the response to DNA damage (SOS response), including recA and lexA. In the presence of single-stranded DNA, RecA interacts with LexA causing an autocatalytic cleavage which disrupts the DNA-binding part of LexA, leading to derepression of the SOS regulon and eventually DNA repair.</text>
</comment>
<comment type="catalytic activity">
    <reaction evidence="1">
        <text>Hydrolysis of Ala-|-Gly bond in repressor LexA.</text>
        <dbReference type="EC" id="3.4.21.88"/>
    </reaction>
</comment>
<comment type="subunit">
    <text evidence="1">Homodimer.</text>
</comment>
<comment type="similarity">
    <text evidence="1">Belongs to the peptidase S24 family.</text>
</comment>
<reference key="1">
    <citation type="submission" date="2007-03" db="EMBL/GenBank/DDBJ databases">
        <authorList>
            <person name="Heidelberg J."/>
        </authorList>
    </citation>
    <scope>NUCLEOTIDE SEQUENCE [LARGE SCALE GENOMIC DNA]</scope>
    <source>
        <strain>ATCC 39541 / Classical Ogawa 395 / O395</strain>
    </source>
</reference>
<reference key="2">
    <citation type="journal article" date="2008" name="PLoS ONE">
        <title>A recalibrated molecular clock and independent origins for the cholera pandemic clones.</title>
        <authorList>
            <person name="Feng L."/>
            <person name="Reeves P.R."/>
            <person name="Lan R."/>
            <person name="Ren Y."/>
            <person name="Gao C."/>
            <person name="Zhou Z."/>
            <person name="Ren Y."/>
            <person name="Cheng J."/>
            <person name="Wang W."/>
            <person name="Wang J."/>
            <person name="Qian W."/>
            <person name="Li D."/>
            <person name="Wang L."/>
        </authorList>
    </citation>
    <scope>NUCLEOTIDE SEQUENCE [LARGE SCALE GENOMIC DNA]</scope>
    <source>
        <strain>ATCC 39541 / Classical Ogawa 395 / O395</strain>
    </source>
</reference>
<evidence type="ECO:0000255" key="1">
    <source>
        <dbReference type="HAMAP-Rule" id="MF_00015"/>
    </source>
</evidence>
<sequence length="209" mass="23029">MKPLTPRQQEVFDLIKSKIDETGMPPTRAEIAKELGFRSANAAEEHLKALARKQVIEMVPGASRGIRILVDNAANEEEAETGLPLIGRVAAGEPILAQEHVEAHYQVDPSMFRPQADFLLRVHGESMKNIGILDGDLLAVHKTQDVRNGQVVVARVEDDVTVKRLERKGSKVFLHAENEEFAPIEVDLAAQSLTIEGIAVGVIRNSTWM</sequence>
<organism>
    <name type="scientific">Vibrio cholerae serotype O1 (strain ATCC 39541 / Classical Ogawa 395 / O395)</name>
    <dbReference type="NCBI Taxonomy" id="345073"/>
    <lineage>
        <taxon>Bacteria</taxon>
        <taxon>Pseudomonadati</taxon>
        <taxon>Pseudomonadota</taxon>
        <taxon>Gammaproteobacteria</taxon>
        <taxon>Vibrionales</taxon>
        <taxon>Vibrionaceae</taxon>
        <taxon>Vibrio</taxon>
    </lineage>
</organism>
<dbReference type="EC" id="3.4.21.88" evidence="1"/>
<dbReference type="EMBL" id="CP000627">
    <property type="protein sequence ID" value="ABQ21263.1"/>
    <property type="molecule type" value="Genomic_DNA"/>
</dbReference>
<dbReference type="EMBL" id="CP001235">
    <property type="protein sequence ID" value="ACP08116.1"/>
    <property type="molecule type" value="Genomic_DNA"/>
</dbReference>
<dbReference type="RefSeq" id="WP_000803693.1">
    <property type="nucleotide sequence ID" value="NZ_JAACZH010000014.1"/>
</dbReference>
<dbReference type="SMR" id="A5F4F6"/>
<dbReference type="MEROPS" id="S24.001"/>
<dbReference type="GeneID" id="69718587"/>
<dbReference type="KEGG" id="vco:VC0395_A2423"/>
<dbReference type="KEGG" id="vcr:VC395_0088"/>
<dbReference type="PATRIC" id="fig|345073.21.peg.80"/>
<dbReference type="eggNOG" id="COG1974">
    <property type="taxonomic scope" value="Bacteria"/>
</dbReference>
<dbReference type="HOGENOM" id="CLU_066192_45_3_6"/>
<dbReference type="OrthoDB" id="9802364at2"/>
<dbReference type="Proteomes" id="UP000000249">
    <property type="component" value="Chromosome 2"/>
</dbReference>
<dbReference type="GO" id="GO:0003677">
    <property type="term" value="F:DNA binding"/>
    <property type="evidence" value="ECO:0007669"/>
    <property type="project" value="UniProtKB-UniRule"/>
</dbReference>
<dbReference type="GO" id="GO:0004252">
    <property type="term" value="F:serine-type endopeptidase activity"/>
    <property type="evidence" value="ECO:0007669"/>
    <property type="project" value="UniProtKB-UniRule"/>
</dbReference>
<dbReference type="GO" id="GO:0006281">
    <property type="term" value="P:DNA repair"/>
    <property type="evidence" value="ECO:0007669"/>
    <property type="project" value="UniProtKB-UniRule"/>
</dbReference>
<dbReference type="GO" id="GO:0006260">
    <property type="term" value="P:DNA replication"/>
    <property type="evidence" value="ECO:0007669"/>
    <property type="project" value="UniProtKB-UniRule"/>
</dbReference>
<dbReference type="GO" id="GO:0045892">
    <property type="term" value="P:negative regulation of DNA-templated transcription"/>
    <property type="evidence" value="ECO:0007669"/>
    <property type="project" value="UniProtKB-UniRule"/>
</dbReference>
<dbReference type="GO" id="GO:0006508">
    <property type="term" value="P:proteolysis"/>
    <property type="evidence" value="ECO:0007669"/>
    <property type="project" value="InterPro"/>
</dbReference>
<dbReference type="GO" id="GO:0009432">
    <property type="term" value="P:SOS response"/>
    <property type="evidence" value="ECO:0007669"/>
    <property type="project" value="UniProtKB-UniRule"/>
</dbReference>
<dbReference type="CDD" id="cd06529">
    <property type="entry name" value="S24_LexA-like"/>
    <property type="match status" value="1"/>
</dbReference>
<dbReference type="FunFam" id="1.10.10.10:FF:000009">
    <property type="entry name" value="LexA repressor"/>
    <property type="match status" value="1"/>
</dbReference>
<dbReference type="FunFam" id="2.10.109.10:FF:000001">
    <property type="entry name" value="LexA repressor"/>
    <property type="match status" value="1"/>
</dbReference>
<dbReference type="Gene3D" id="2.10.109.10">
    <property type="entry name" value="Umud Fragment, subunit A"/>
    <property type="match status" value="1"/>
</dbReference>
<dbReference type="Gene3D" id="1.10.10.10">
    <property type="entry name" value="Winged helix-like DNA-binding domain superfamily/Winged helix DNA-binding domain"/>
    <property type="match status" value="1"/>
</dbReference>
<dbReference type="HAMAP" id="MF_00015">
    <property type="entry name" value="LexA"/>
    <property type="match status" value="1"/>
</dbReference>
<dbReference type="InterPro" id="IPR006200">
    <property type="entry name" value="LexA"/>
</dbReference>
<dbReference type="InterPro" id="IPR039418">
    <property type="entry name" value="LexA-like"/>
</dbReference>
<dbReference type="InterPro" id="IPR036286">
    <property type="entry name" value="LexA/Signal_pep-like_sf"/>
</dbReference>
<dbReference type="InterPro" id="IPR006199">
    <property type="entry name" value="LexA_DNA-bd_dom"/>
</dbReference>
<dbReference type="InterPro" id="IPR050077">
    <property type="entry name" value="LexA_repressor"/>
</dbReference>
<dbReference type="InterPro" id="IPR006197">
    <property type="entry name" value="Peptidase_S24_LexA"/>
</dbReference>
<dbReference type="InterPro" id="IPR015927">
    <property type="entry name" value="Peptidase_S24_S26A/B/C"/>
</dbReference>
<dbReference type="InterPro" id="IPR036388">
    <property type="entry name" value="WH-like_DNA-bd_sf"/>
</dbReference>
<dbReference type="InterPro" id="IPR036390">
    <property type="entry name" value="WH_DNA-bd_sf"/>
</dbReference>
<dbReference type="NCBIfam" id="TIGR00498">
    <property type="entry name" value="lexA"/>
    <property type="match status" value="1"/>
</dbReference>
<dbReference type="PANTHER" id="PTHR33516">
    <property type="entry name" value="LEXA REPRESSOR"/>
    <property type="match status" value="1"/>
</dbReference>
<dbReference type="PANTHER" id="PTHR33516:SF2">
    <property type="entry name" value="LEXA REPRESSOR-RELATED"/>
    <property type="match status" value="1"/>
</dbReference>
<dbReference type="Pfam" id="PF01726">
    <property type="entry name" value="LexA_DNA_bind"/>
    <property type="match status" value="1"/>
</dbReference>
<dbReference type="Pfam" id="PF00717">
    <property type="entry name" value="Peptidase_S24"/>
    <property type="match status" value="1"/>
</dbReference>
<dbReference type="PRINTS" id="PR00726">
    <property type="entry name" value="LEXASERPTASE"/>
</dbReference>
<dbReference type="SUPFAM" id="SSF51306">
    <property type="entry name" value="LexA/Signal peptidase"/>
    <property type="match status" value="1"/>
</dbReference>
<dbReference type="SUPFAM" id="SSF46785">
    <property type="entry name" value="Winged helix' DNA-binding domain"/>
    <property type="match status" value="1"/>
</dbReference>